<organism>
    <name type="scientific">Roseiflexus castenholzii (strain DSM 13941 / HLO8)</name>
    <dbReference type="NCBI Taxonomy" id="383372"/>
    <lineage>
        <taxon>Bacteria</taxon>
        <taxon>Bacillati</taxon>
        <taxon>Chloroflexota</taxon>
        <taxon>Chloroflexia</taxon>
        <taxon>Chloroflexales</taxon>
        <taxon>Roseiflexineae</taxon>
        <taxon>Roseiflexaceae</taxon>
        <taxon>Roseiflexus</taxon>
    </lineage>
</organism>
<keyword id="KW-0030">Aminoacyl-tRNA synthetase</keyword>
<keyword id="KW-0067">ATP-binding</keyword>
<keyword id="KW-0963">Cytoplasm</keyword>
<keyword id="KW-0436">Ligase</keyword>
<keyword id="KW-0547">Nucleotide-binding</keyword>
<keyword id="KW-0648">Protein biosynthesis</keyword>
<keyword id="KW-1185">Reference proteome</keyword>
<gene>
    <name evidence="1" type="primary">leuS</name>
    <name type="ordered locus">Rcas_0077</name>
</gene>
<evidence type="ECO:0000255" key="1">
    <source>
        <dbReference type="HAMAP-Rule" id="MF_00049"/>
    </source>
</evidence>
<name>SYL_ROSCS</name>
<feature type="chain" id="PRO_0000334806" description="Leucine--tRNA ligase">
    <location>
        <begin position="1"/>
        <end position="904"/>
    </location>
</feature>
<feature type="short sequence motif" description="'HIGH' region">
    <location>
        <begin position="49"/>
        <end position="59"/>
    </location>
</feature>
<feature type="short sequence motif" description="'KMSKS' region">
    <location>
        <begin position="663"/>
        <end position="667"/>
    </location>
</feature>
<feature type="binding site" evidence="1">
    <location>
        <position position="666"/>
    </location>
    <ligand>
        <name>ATP</name>
        <dbReference type="ChEBI" id="CHEBI:30616"/>
    </ligand>
</feature>
<sequence length="904" mass="101643">MSDTGTKRRIERFDPAIEPKWREFWEREGIFKAGRRAGAPRRYILEMFPYPSGDLHIGHLKNYVIGDALTRYYVIRGYDVLHPFGWDAFGLPAENAAIKYGRHPREWTYGNIAESKKSLEIAGIMYDWSREVTTCDPDYYRWNQWLFLLLYRKGLAYRAKATVNWDPVDQTVLANEQVDAEGRSWRSGAKVEKRELEQWFFRITAYAERLLNDLDKLDKWPENVKTMQRNWIGRSEGAEVTFLALPPGADLHAPPPPDAEPLVVFTTRPDTLWGATFMVLAPEHPLVSKLTAPERRAEVEAYIARARMESEIERTSATREKTGVFLGSYAINPVNDERIPIWIADYVLMGYGAGAIMAVPAHDERDFAFARQFGLPVRVVVQPPGETLDGATMTEAWPGDGVMVNSGPINGLPVGKGEGQSVKATIAWLEANGKGKGTVTYRLRDWLISRQRYWGTPIPMLHLPDGTIKPVPEDQLPVVLPEVQDYLPKGKSPLAAAESWVNTIDPETGQPARRDTDTMDTFVDSSWYFLRFCDARNDREIFSREAAHRWMPVDQYIGGVEHAILHLLYARFITKVLYDEGLVPDDEPFRALFTQGMVQRRVRTPLEVVAPGMVRFPEELRRKLELPADAQSLDQARALLKERGYTLEEESNGGFTAVSGPVTMSKSAGNGIPVGPFVRQYGSDVARIVVLFAAPPENSMEWTDEGVAGAQRFLNRIVALFSPDREEIVAALNSGNGAAPEGEERALYRKLHETIRKVTLDTEQFRFNTAIAALMELLNEASRYRSEAGRVTPVFAQTAATFARLLSPFAPHLAEELHSWCGGTGSVYDTGWPEWDEAALALDEVEIVLQVNGKLRGRIMAPANADEQQLREWALTNPRVLSFVGDKTVRKVVVVPGKLVNVVV</sequence>
<proteinExistence type="inferred from homology"/>
<comment type="catalytic activity">
    <reaction evidence="1">
        <text>tRNA(Leu) + L-leucine + ATP = L-leucyl-tRNA(Leu) + AMP + diphosphate</text>
        <dbReference type="Rhea" id="RHEA:11688"/>
        <dbReference type="Rhea" id="RHEA-COMP:9613"/>
        <dbReference type="Rhea" id="RHEA-COMP:9622"/>
        <dbReference type="ChEBI" id="CHEBI:30616"/>
        <dbReference type="ChEBI" id="CHEBI:33019"/>
        <dbReference type="ChEBI" id="CHEBI:57427"/>
        <dbReference type="ChEBI" id="CHEBI:78442"/>
        <dbReference type="ChEBI" id="CHEBI:78494"/>
        <dbReference type="ChEBI" id="CHEBI:456215"/>
        <dbReference type="EC" id="6.1.1.4"/>
    </reaction>
</comment>
<comment type="subcellular location">
    <subcellularLocation>
        <location evidence="1">Cytoplasm</location>
    </subcellularLocation>
</comment>
<comment type="similarity">
    <text evidence="1">Belongs to the class-I aminoacyl-tRNA synthetase family.</text>
</comment>
<protein>
    <recommendedName>
        <fullName evidence="1">Leucine--tRNA ligase</fullName>
        <ecNumber evidence="1">6.1.1.4</ecNumber>
    </recommendedName>
    <alternativeName>
        <fullName evidence="1">Leucyl-tRNA synthetase</fullName>
        <shortName evidence="1">LeuRS</shortName>
    </alternativeName>
</protein>
<dbReference type="EC" id="6.1.1.4" evidence="1"/>
<dbReference type="EMBL" id="CP000804">
    <property type="protein sequence ID" value="ABU56214.1"/>
    <property type="molecule type" value="Genomic_DNA"/>
</dbReference>
<dbReference type="RefSeq" id="WP_011997619.1">
    <property type="nucleotide sequence ID" value="NC_009767.1"/>
</dbReference>
<dbReference type="SMR" id="A7NFJ2"/>
<dbReference type="STRING" id="383372.Rcas_0077"/>
<dbReference type="KEGG" id="rca:Rcas_0077"/>
<dbReference type="eggNOG" id="COG0495">
    <property type="taxonomic scope" value="Bacteria"/>
</dbReference>
<dbReference type="HOGENOM" id="CLU_004427_0_0_0"/>
<dbReference type="OrthoDB" id="9810365at2"/>
<dbReference type="Proteomes" id="UP000000263">
    <property type="component" value="Chromosome"/>
</dbReference>
<dbReference type="GO" id="GO:0005829">
    <property type="term" value="C:cytosol"/>
    <property type="evidence" value="ECO:0007669"/>
    <property type="project" value="TreeGrafter"/>
</dbReference>
<dbReference type="GO" id="GO:0002161">
    <property type="term" value="F:aminoacyl-tRNA deacylase activity"/>
    <property type="evidence" value="ECO:0007669"/>
    <property type="project" value="InterPro"/>
</dbReference>
<dbReference type="GO" id="GO:0005524">
    <property type="term" value="F:ATP binding"/>
    <property type="evidence" value="ECO:0007669"/>
    <property type="project" value="UniProtKB-UniRule"/>
</dbReference>
<dbReference type="GO" id="GO:0004823">
    <property type="term" value="F:leucine-tRNA ligase activity"/>
    <property type="evidence" value="ECO:0007669"/>
    <property type="project" value="UniProtKB-UniRule"/>
</dbReference>
<dbReference type="GO" id="GO:0006429">
    <property type="term" value="P:leucyl-tRNA aminoacylation"/>
    <property type="evidence" value="ECO:0007669"/>
    <property type="project" value="UniProtKB-UniRule"/>
</dbReference>
<dbReference type="CDD" id="cd07958">
    <property type="entry name" value="Anticodon_Ia_Leu_BEm"/>
    <property type="match status" value="1"/>
</dbReference>
<dbReference type="CDD" id="cd00812">
    <property type="entry name" value="LeuRS_core"/>
    <property type="match status" value="1"/>
</dbReference>
<dbReference type="FunFam" id="1.10.730.10:FF:000002">
    <property type="entry name" value="Leucine--tRNA ligase"/>
    <property type="match status" value="1"/>
</dbReference>
<dbReference type="FunFam" id="3.10.20.590:FF:000001">
    <property type="entry name" value="Leucine--tRNA ligase"/>
    <property type="match status" value="1"/>
</dbReference>
<dbReference type="FunFam" id="3.40.50.620:FF:000003">
    <property type="entry name" value="Leucine--tRNA ligase"/>
    <property type="match status" value="1"/>
</dbReference>
<dbReference type="FunFam" id="3.40.50.620:FF:000056">
    <property type="entry name" value="Leucine--tRNA ligase"/>
    <property type="match status" value="1"/>
</dbReference>
<dbReference type="Gene3D" id="3.40.50.620">
    <property type="entry name" value="HUPs"/>
    <property type="match status" value="2"/>
</dbReference>
<dbReference type="Gene3D" id="1.10.730.10">
    <property type="entry name" value="Isoleucyl-tRNA Synthetase, Domain 1"/>
    <property type="match status" value="1"/>
</dbReference>
<dbReference type="Gene3D" id="3.90.740.10">
    <property type="entry name" value="Valyl/Leucyl/Isoleucyl-tRNA synthetase, editing domain"/>
    <property type="match status" value="1"/>
</dbReference>
<dbReference type="HAMAP" id="MF_00049_B">
    <property type="entry name" value="Leu_tRNA_synth_B"/>
    <property type="match status" value="1"/>
</dbReference>
<dbReference type="InterPro" id="IPR001412">
    <property type="entry name" value="aa-tRNA-synth_I_CS"/>
</dbReference>
<dbReference type="InterPro" id="IPR002300">
    <property type="entry name" value="aa-tRNA-synth_Ia"/>
</dbReference>
<dbReference type="InterPro" id="IPR002302">
    <property type="entry name" value="Leu-tRNA-ligase"/>
</dbReference>
<dbReference type="InterPro" id="IPR025709">
    <property type="entry name" value="Leu_tRNA-synth_edit"/>
</dbReference>
<dbReference type="InterPro" id="IPR013155">
    <property type="entry name" value="M/V/L/I-tRNA-synth_anticd-bd"/>
</dbReference>
<dbReference type="InterPro" id="IPR015413">
    <property type="entry name" value="Methionyl/Leucyl_tRNA_Synth"/>
</dbReference>
<dbReference type="InterPro" id="IPR014729">
    <property type="entry name" value="Rossmann-like_a/b/a_fold"/>
</dbReference>
<dbReference type="InterPro" id="IPR009080">
    <property type="entry name" value="tRNAsynth_Ia_anticodon-bd"/>
</dbReference>
<dbReference type="InterPro" id="IPR009008">
    <property type="entry name" value="Val/Leu/Ile-tRNA-synth_edit"/>
</dbReference>
<dbReference type="NCBIfam" id="TIGR00396">
    <property type="entry name" value="leuS_bact"/>
    <property type="match status" value="1"/>
</dbReference>
<dbReference type="PANTHER" id="PTHR43740:SF2">
    <property type="entry name" value="LEUCINE--TRNA LIGASE, MITOCHONDRIAL"/>
    <property type="match status" value="1"/>
</dbReference>
<dbReference type="PANTHER" id="PTHR43740">
    <property type="entry name" value="LEUCYL-TRNA SYNTHETASE"/>
    <property type="match status" value="1"/>
</dbReference>
<dbReference type="Pfam" id="PF08264">
    <property type="entry name" value="Anticodon_1"/>
    <property type="match status" value="1"/>
</dbReference>
<dbReference type="Pfam" id="PF00133">
    <property type="entry name" value="tRNA-synt_1"/>
    <property type="match status" value="1"/>
</dbReference>
<dbReference type="Pfam" id="PF13603">
    <property type="entry name" value="tRNA-synt_1_2"/>
    <property type="match status" value="1"/>
</dbReference>
<dbReference type="Pfam" id="PF09334">
    <property type="entry name" value="tRNA-synt_1g"/>
    <property type="match status" value="1"/>
</dbReference>
<dbReference type="PRINTS" id="PR00985">
    <property type="entry name" value="TRNASYNTHLEU"/>
</dbReference>
<dbReference type="SUPFAM" id="SSF47323">
    <property type="entry name" value="Anticodon-binding domain of a subclass of class I aminoacyl-tRNA synthetases"/>
    <property type="match status" value="1"/>
</dbReference>
<dbReference type="SUPFAM" id="SSF52374">
    <property type="entry name" value="Nucleotidylyl transferase"/>
    <property type="match status" value="1"/>
</dbReference>
<dbReference type="SUPFAM" id="SSF50677">
    <property type="entry name" value="ValRS/IleRS/LeuRS editing domain"/>
    <property type="match status" value="1"/>
</dbReference>
<dbReference type="PROSITE" id="PS00178">
    <property type="entry name" value="AA_TRNA_LIGASE_I"/>
    <property type="match status" value="1"/>
</dbReference>
<reference key="1">
    <citation type="submission" date="2007-08" db="EMBL/GenBank/DDBJ databases">
        <title>Complete sequence of Roseiflexus castenholzii DSM 13941.</title>
        <authorList>
            <consortium name="US DOE Joint Genome Institute"/>
            <person name="Copeland A."/>
            <person name="Lucas S."/>
            <person name="Lapidus A."/>
            <person name="Barry K."/>
            <person name="Glavina del Rio T."/>
            <person name="Dalin E."/>
            <person name="Tice H."/>
            <person name="Pitluck S."/>
            <person name="Thompson L.S."/>
            <person name="Brettin T."/>
            <person name="Bruce D."/>
            <person name="Detter J.C."/>
            <person name="Han C."/>
            <person name="Tapia R."/>
            <person name="Schmutz J."/>
            <person name="Larimer F."/>
            <person name="Land M."/>
            <person name="Hauser L."/>
            <person name="Kyrpides N."/>
            <person name="Mikhailova N."/>
            <person name="Bryant D.A."/>
            <person name="Hanada S."/>
            <person name="Tsukatani Y."/>
            <person name="Richardson P."/>
        </authorList>
    </citation>
    <scope>NUCLEOTIDE SEQUENCE [LARGE SCALE GENOMIC DNA]</scope>
    <source>
        <strain>DSM 13941 / HLO8</strain>
    </source>
</reference>
<accession>A7NFJ2</accession>